<dbReference type="EC" id="3.6.5.n1" evidence="1"/>
<dbReference type="EMBL" id="CP001598">
    <property type="protein sequence ID" value="ACQ46594.1"/>
    <property type="molecule type" value="Genomic_DNA"/>
</dbReference>
<dbReference type="RefSeq" id="WP_001030947.1">
    <property type="nucleotide sequence ID" value="NC_012659.1"/>
</dbReference>
<dbReference type="SMR" id="C3P8M5"/>
<dbReference type="GeneID" id="45024196"/>
<dbReference type="KEGG" id="bai:BAA_4563"/>
<dbReference type="HOGENOM" id="CLU_009995_3_3_9"/>
<dbReference type="GO" id="GO:0005886">
    <property type="term" value="C:plasma membrane"/>
    <property type="evidence" value="ECO:0007669"/>
    <property type="project" value="UniProtKB-SubCell"/>
</dbReference>
<dbReference type="GO" id="GO:0005525">
    <property type="term" value="F:GTP binding"/>
    <property type="evidence" value="ECO:0007669"/>
    <property type="project" value="UniProtKB-UniRule"/>
</dbReference>
<dbReference type="GO" id="GO:0003924">
    <property type="term" value="F:GTPase activity"/>
    <property type="evidence" value="ECO:0007669"/>
    <property type="project" value="UniProtKB-UniRule"/>
</dbReference>
<dbReference type="GO" id="GO:0043022">
    <property type="term" value="F:ribosome binding"/>
    <property type="evidence" value="ECO:0007669"/>
    <property type="project" value="UniProtKB-UniRule"/>
</dbReference>
<dbReference type="GO" id="GO:0003746">
    <property type="term" value="F:translation elongation factor activity"/>
    <property type="evidence" value="ECO:0007669"/>
    <property type="project" value="UniProtKB-UniRule"/>
</dbReference>
<dbReference type="GO" id="GO:0045727">
    <property type="term" value="P:positive regulation of translation"/>
    <property type="evidence" value="ECO:0007669"/>
    <property type="project" value="UniProtKB-UniRule"/>
</dbReference>
<dbReference type="CDD" id="cd03699">
    <property type="entry name" value="EF4_II"/>
    <property type="match status" value="1"/>
</dbReference>
<dbReference type="CDD" id="cd16260">
    <property type="entry name" value="EF4_III"/>
    <property type="match status" value="1"/>
</dbReference>
<dbReference type="CDD" id="cd01890">
    <property type="entry name" value="LepA"/>
    <property type="match status" value="1"/>
</dbReference>
<dbReference type="CDD" id="cd03709">
    <property type="entry name" value="lepA_C"/>
    <property type="match status" value="1"/>
</dbReference>
<dbReference type="FunFam" id="3.40.50.300:FF:000078">
    <property type="entry name" value="Elongation factor 4"/>
    <property type="match status" value="1"/>
</dbReference>
<dbReference type="FunFam" id="2.40.30.10:FF:000015">
    <property type="entry name" value="Translation factor GUF1, mitochondrial"/>
    <property type="match status" value="1"/>
</dbReference>
<dbReference type="FunFam" id="3.30.70.240:FF:000007">
    <property type="entry name" value="Translation factor GUF1, mitochondrial"/>
    <property type="match status" value="1"/>
</dbReference>
<dbReference type="FunFam" id="3.30.70.2570:FF:000001">
    <property type="entry name" value="Translation factor GUF1, mitochondrial"/>
    <property type="match status" value="1"/>
</dbReference>
<dbReference type="FunFam" id="3.30.70.870:FF:000004">
    <property type="entry name" value="Translation factor GUF1, mitochondrial"/>
    <property type="match status" value="1"/>
</dbReference>
<dbReference type="Gene3D" id="3.30.70.240">
    <property type="match status" value="1"/>
</dbReference>
<dbReference type="Gene3D" id="3.30.70.2570">
    <property type="entry name" value="Elongation factor 4, C-terminal domain"/>
    <property type="match status" value="1"/>
</dbReference>
<dbReference type="Gene3D" id="3.30.70.870">
    <property type="entry name" value="Elongation Factor G (Translational Gtpase), domain 3"/>
    <property type="match status" value="1"/>
</dbReference>
<dbReference type="Gene3D" id="3.40.50.300">
    <property type="entry name" value="P-loop containing nucleotide triphosphate hydrolases"/>
    <property type="match status" value="1"/>
</dbReference>
<dbReference type="Gene3D" id="2.40.30.10">
    <property type="entry name" value="Translation factors"/>
    <property type="match status" value="1"/>
</dbReference>
<dbReference type="HAMAP" id="MF_00071">
    <property type="entry name" value="LepA"/>
    <property type="match status" value="1"/>
</dbReference>
<dbReference type="InterPro" id="IPR006297">
    <property type="entry name" value="EF-4"/>
</dbReference>
<dbReference type="InterPro" id="IPR035647">
    <property type="entry name" value="EFG_III/V"/>
</dbReference>
<dbReference type="InterPro" id="IPR000640">
    <property type="entry name" value="EFG_V-like"/>
</dbReference>
<dbReference type="InterPro" id="IPR004161">
    <property type="entry name" value="EFTu-like_2"/>
</dbReference>
<dbReference type="InterPro" id="IPR031157">
    <property type="entry name" value="G_TR_CS"/>
</dbReference>
<dbReference type="InterPro" id="IPR038363">
    <property type="entry name" value="LepA_C_sf"/>
</dbReference>
<dbReference type="InterPro" id="IPR013842">
    <property type="entry name" value="LepA_CTD"/>
</dbReference>
<dbReference type="InterPro" id="IPR035654">
    <property type="entry name" value="LepA_IV"/>
</dbReference>
<dbReference type="InterPro" id="IPR027417">
    <property type="entry name" value="P-loop_NTPase"/>
</dbReference>
<dbReference type="InterPro" id="IPR005225">
    <property type="entry name" value="Small_GTP-bd"/>
</dbReference>
<dbReference type="InterPro" id="IPR000795">
    <property type="entry name" value="T_Tr_GTP-bd_dom"/>
</dbReference>
<dbReference type="NCBIfam" id="TIGR01393">
    <property type="entry name" value="lepA"/>
    <property type="match status" value="1"/>
</dbReference>
<dbReference type="NCBIfam" id="TIGR00231">
    <property type="entry name" value="small_GTP"/>
    <property type="match status" value="1"/>
</dbReference>
<dbReference type="PANTHER" id="PTHR43512:SF4">
    <property type="entry name" value="TRANSLATION FACTOR GUF1 HOMOLOG, CHLOROPLASTIC"/>
    <property type="match status" value="1"/>
</dbReference>
<dbReference type="PANTHER" id="PTHR43512">
    <property type="entry name" value="TRANSLATION FACTOR GUF1-RELATED"/>
    <property type="match status" value="1"/>
</dbReference>
<dbReference type="Pfam" id="PF00679">
    <property type="entry name" value="EFG_C"/>
    <property type="match status" value="1"/>
</dbReference>
<dbReference type="Pfam" id="PF00009">
    <property type="entry name" value="GTP_EFTU"/>
    <property type="match status" value="1"/>
</dbReference>
<dbReference type="Pfam" id="PF03144">
    <property type="entry name" value="GTP_EFTU_D2"/>
    <property type="match status" value="1"/>
</dbReference>
<dbReference type="Pfam" id="PF06421">
    <property type="entry name" value="LepA_C"/>
    <property type="match status" value="1"/>
</dbReference>
<dbReference type="PRINTS" id="PR00315">
    <property type="entry name" value="ELONGATNFCT"/>
</dbReference>
<dbReference type="SMART" id="SM00838">
    <property type="entry name" value="EFG_C"/>
    <property type="match status" value="1"/>
</dbReference>
<dbReference type="SUPFAM" id="SSF54980">
    <property type="entry name" value="EF-G C-terminal domain-like"/>
    <property type="match status" value="2"/>
</dbReference>
<dbReference type="SUPFAM" id="SSF52540">
    <property type="entry name" value="P-loop containing nucleoside triphosphate hydrolases"/>
    <property type="match status" value="1"/>
</dbReference>
<dbReference type="PROSITE" id="PS00301">
    <property type="entry name" value="G_TR_1"/>
    <property type="match status" value="1"/>
</dbReference>
<dbReference type="PROSITE" id="PS51722">
    <property type="entry name" value="G_TR_2"/>
    <property type="match status" value="1"/>
</dbReference>
<comment type="function">
    <text evidence="1">Required for accurate and efficient protein synthesis under certain stress conditions. May act as a fidelity factor of the translation reaction, by catalyzing a one-codon backward translocation of tRNAs on improperly translocated ribosomes. Back-translocation proceeds from a post-translocation (POST) complex to a pre-translocation (PRE) complex, thus giving elongation factor G a second chance to translocate the tRNAs correctly. Binds to ribosomes in a GTP-dependent manner.</text>
</comment>
<comment type="catalytic activity">
    <reaction evidence="1">
        <text>GTP + H2O = GDP + phosphate + H(+)</text>
        <dbReference type="Rhea" id="RHEA:19669"/>
        <dbReference type="ChEBI" id="CHEBI:15377"/>
        <dbReference type="ChEBI" id="CHEBI:15378"/>
        <dbReference type="ChEBI" id="CHEBI:37565"/>
        <dbReference type="ChEBI" id="CHEBI:43474"/>
        <dbReference type="ChEBI" id="CHEBI:58189"/>
        <dbReference type="EC" id="3.6.5.n1"/>
    </reaction>
</comment>
<comment type="subcellular location">
    <subcellularLocation>
        <location evidence="1">Cell membrane</location>
        <topology evidence="1">Peripheral membrane protein</topology>
        <orientation evidence="1">Cytoplasmic side</orientation>
    </subcellularLocation>
</comment>
<comment type="similarity">
    <text evidence="1">Belongs to the TRAFAC class translation factor GTPase superfamily. Classic translation factor GTPase family. LepA subfamily.</text>
</comment>
<name>LEPA_BACAA</name>
<keyword id="KW-1003">Cell membrane</keyword>
<keyword id="KW-0342">GTP-binding</keyword>
<keyword id="KW-0378">Hydrolase</keyword>
<keyword id="KW-0472">Membrane</keyword>
<keyword id="KW-0547">Nucleotide-binding</keyword>
<keyword id="KW-0648">Protein biosynthesis</keyword>
<reference key="1">
    <citation type="submission" date="2009-04" db="EMBL/GenBank/DDBJ databases">
        <title>Genome sequence of Bacillus anthracis A0248.</title>
        <authorList>
            <person name="Dodson R.J."/>
            <person name="Munk A.C."/>
            <person name="Bruce D."/>
            <person name="Detter C."/>
            <person name="Tapia R."/>
            <person name="Sutton G."/>
            <person name="Sims D."/>
            <person name="Brettin T."/>
        </authorList>
    </citation>
    <scope>NUCLEOTIDE SEQUENCE [LARGE SCALE GENOMIC DNA]</scope>
    <source>
        <strain>A0248</strain>
    </source>
</reference>
<feature type="chain" id="PRO_1000118033" description="Elongation factor 4">
    <location>
        <begin position="1"/>
        <end position="607"/>
    </location>
</feature>
<feature type="domain" description="tr-type G">
    <location>
        <begin position="11"/>
        <end position="193"/>
    </location>
</feature>
<feature type="binding site" evidence="1">
    <location>
        <begin position="23"/>
        <end position="28"/>
    </location>
    <ligand>
        <name>GTP</name>
        <dbReference type="ChEBI" id="CHEBI:37565"/>
    </ligand>
</feature>
<feature type="binding site" evidence="1">
    <location>
        <begin position="140"/>
        <end position="143"/>
    </location>
    <ligand>
        <name>GTP</name>
        <dbReference type="ChEBI" id="CHEBI:37565"/>
    </ligand>
</feature>
<accession>C3P8M5</accession>
<evidence type="ECO:0000255" key="1">
    <source>
        <dbReference type="HAMAP-Rule" id="MF_00071"/>
    </source>
</evidence>
<sequence>MNKEERAKRQSKIRNFSIIAHIDHGKSTLADRILEKTNALTQREMKAQLLDSMDLERERGITIKLNAIQLNYKAKDGEEYILHLIDTPGHVDFTYEVSRSLAACEGAILVVDAAQGIEAQTLANVYLALDNNLEILPVINKIDLPSADPERVRQEVEDVIGLDASEAVLASAKAGIGIEEILEQIVEKVPAPTGDSEEPLQCMIFDSLYDPYRGVIAYIRVVNGTVKVGDKVRMMATGKEFEVTEVGVFTPKTTQRDELTVGDVGFLAASIKNVGDTRVGDTITHAKRPAAEPLAGYRKLNPMVFCGLYPIDSARYNDLRDALEKLELNDSALEFEPETSQALGFGFRCGFLGLLHMEILQERIEREFKIDLITTAPSVIYKVFLTNGEDMIVDNPSNMPDPQTIDRVEEPFVKAAIMVPNDYVGAVMEICQGKRGTFIDMQYLDETRVTLTYEIPLSEIVYDFFDQLKSNTKGYASFDYELIGYKPSKLVKMDILLNSEQVDALSFIVHRDSAYDRGKVIVEKLKELIPRQQFEVPIQATIGNKVVARSTIKAMRKNVLAKCYGGDISRKRKLLDKQKEGKKRMKSVGSVEVPQEAFMAVLKMDDN</sequence>
<protein>
    <recommendedName>
        <fullName evidence="1">Elongation factor 4</fullName>
        <shortName evidence="1">EF-4</shortName>
        <ecNumber evidence="1">3.6.5.n1</ecNumber>
    </recommendedName>
    <alternativeName>
        <fullName evidence="1">Ribosomal back-translocase LepA</fullName>
    </alternativeName>
</protein>
<organism>
    <name type="scientific">Bacillus anthracis (strain A0248)</name>
    <dbReference type="NCBI Taxonomy" id="592021"/>
    <lineage>
        <taxon>Bacteria</taxon>
        <taxon>Bacillati</taxon>
        <taxon>Bacillota</taxon>
        <taxon>Bacilli</taxon>
        <taxon>Bacillales</taxon>
        <taxon>Bacillaceae</taxon>
        <taxon>Bacillus</taxon>
        <taxon>Bacillus cereus group</taxon>
    </lineage>
</organism>
<gene>
    <name evidence="1" type="primary">lepA</name>
    <name type="ordered locus">BAA_4563</name>
</gene>
<proteinExistence type="inferred from homology"/>